<evidence type="ECO:0000250" key="1"/>
<evidence type="ECO:0000305" key="2"/>
<feature type="chain" id="PRO_0000297611" description="Nucleoprotein">
    <location>
        <begin position="1"/>
        <end position="450"/>
    </location>
</feature>
<feature type="modified residue" description="Phosphoserine; by host" evidence="1">
    <location>
        <position position="389"/>
    </location>
</feature>
<name>NCAP_LBV</name>
<comment type="function">
    <text evidence="1">Encapsidates the genome, protecting it from nucleases. If expressed without protein P it binds non-specifically RNA and therefore can bind it's own mRNA. Interaction with protein P abolishes any non-specific RNA binding, and prevents phosphorylation. The soluble N-P complex encapsidates specifically the genomic RNA, with protein N protecting the genome like a pearl necklace. The encapsidated genomic RNA is termed the nucleocapsid (NC) and serves as template for viral transcription and replication. Protein N binds protein P in the NC through a different interaction, and can be phosphorylated. Subsequent viral replication is dependent on intracellular concentration of newly synthesized protein N. During replication, encapsidation by protein N is coupled to RNA synthesis and all replicative products are resistant to nucleases (By similarity).</text>
</comment>
<comment type="subunit">
    <text evidence="1">Homomultimerizes to form the nucleocapsid. Binds to viral genomic RNA (By similarity).</text>
</comment>
<comment type="subcellular location">
    <subcellularLocation>
        <location>Virion</location>
    </subcellularLocation>
    <subcellularLocation>
        <location evidence="1">Host cytoplasm</location>
    </subcellularLocation>
</comment>
<comment type="PTM">
    <text evidence="1">Phosphorylated by host.</text>
</comment>
<comment type="similarity">
    <text evidence="2">Belongs to the lyssavirus nucleocapsid protein family.</text>
</comment>
<gene>
    <name type="primary">N</name>
</gene>
<accession>Q82994</accession>
<keyword id="KW-0167">Capsid protein</keyword>
<keyword id="KW-1139">Helical capsid protein</keyword>
<keyword id="KW-1035">Host cytoplasm</keyword>
<keyword id="KW-0597">Phosphoprotein</keyword>
<keyword id="KW-0687">Ribonucleoprotein</keyword>
<keyword id="KW-0694">RNA-binding</keyword>
<keyword id="KW-0543">Viral nucleoprotein</keyword>
<keyword id="KW-0946">Virion</keyword>
<dbReference type="EMBL" id="U22842">
    <property type="protein sequence ID" value="AAA80290.1"/>
    <property type="molecule type" value="Genomic_RNA"/>
</dbReference>
<dbReference type="SMR" id="Q82994"/>
<dbReference type="GO" id="GO:0019029">
    <property type="term" value="C:helical viral capsid"/>
    <property type="evidence" value="ECO:0007669"/>
    <property type="project" value="UniProtKB-KW"/>
</dbReference>
<dbReference type="GO" id="GO:0030430">
    <property type="term" value="C:host cell cytoplasm"/>
    <property type="evidence" value="ECO:0007669"/>
    <property type="project" value="UniProtKB-SubCell"/>
</dbReference>
<dbReference type="GO" id="GO:1990904">
    <property type="term" value="C:ribonucleoprotein complex"/>
    <property type="evidence" value="ECO:0007669"/>
    <property type="project" value="UniProtKB-KW"/>
</dbReference>
<dbReference type="GO" id="GO:0019013">
    <property type="term" value="C:viral nucleocapsid"/>
    <property type="evidence" value="ECO:0007669"/>
    <property type="project" value="UniProtKB-KW"/>
</dbReference>
<dbReference type="GO" id="GO:0003723">
    <property type="term" value="F:RNA binding"/>
    <property type="evidence" value="ECO:0007669"/>
    <property type="project" value="UniProtKB-KW"/>
</dbReference>
<dbReference type="Gene3D" id="1.10.3610.10">
    <property type="entry name" value="Nucleoprotein"/>
    <property type="match status" value="1"/>
</dbReference>
<dbReference type="Gene3D" id="1.10.3570.10">
    <property type="entry name" value="Rhabdovirus nucleocapsid protein like domain"/>
    <property type="match status" value="1"/>
</dbReference>
<dbReference type="InterPro" id="IPR000448">
    <property type="entry name" value="Rhabdo_ncapsid"/>
</dbReference>
<dbReference type="InterPro" id="IPR023331">
    <property type="entry name" value="Rhabdovirus_ncapsid_C"/>
</dbReference>
<dbReference type="InterPro" id="IPR023330">
    <property type="entry name" value="Rhabdovirus_ncapsid_N"/>
</dbReference>
<dbReference type="InterPro" id="IPR035961">
    <property type="entry name" value="Rhabdovirus_nucleoprotein-like"/>
</dbReference>
<dbReference type="Pfam" id="PF00945">
    <property type="entry name" value="Rhabdo_ncap"/>
    <property type="match status" value="1"/>
</dbReference>
<dbReference type="SUPFAM" id="SSF140809">
    <property type="entry name" value="Rhabdovirus nucleoprotein-like"/>
    <property type="match status" value="1"/>
</dbReference>
<proteinExistence type="inferred from homology"/>
<organism>
    <name type="scientific">Lagos bat virus</name>
    <name type="common">LBV</name>
    <dbReference type="NCBI Taxonomy" id="38766"/>
    <lineage>
        <taxon>Viruses</taxon>
        <taxon>Riboviria</taxon>
        <taxon>Orthornavirae</taxon>
        <taxon>Negarnaviricota</taxon>
        <taxon>Haploviricotina</taxon>
        <taxon>Monjiviricetes</taxon>
        <taxon>Mononegavirales</taxon>
        <taxon>Rhabdoviridae</taxon>
        <taxon>Alpharhabdovirinae</taxon>
        <taxon>Lyssavirus</taxon>
    </lineage>
</organism>
<protein>
    <recommendedName>
        <fullName>Nucleoprotein</fullName>
        <shortName>NP</shortName>
    </recommendedName>
    <alternativeName>
        <fullName>Nucleocapsid protein</fullName>
        <shortName>Protein N</shortName>
    </alternativeName>
</protein>
<reference key="1">
    <citation type="journal article" date="1995" name="Virology">
        <title>Genetic polymorphism in the rabies virus nucleoprotein gene.</title>
        <authorList>
            <person name="Kissi B."/>
            <person name="Tordo N."/>
            <person name="Bourhy H."/>
        </authorList>
    </citation>
    <scope>NUCLEOTIDE SEQUENCE [GENOMIC RNA]</scope>
    <source>
        <strain>Nigeria/8619/1958</strain>
    </source>
</reference>
<sequence>MDSERIVFRVHNQVVSLKPEIISDQYEYKYPAITDGKKPGITLGRAPDLSTAYKSILSGMNAAKLDSDDVCSYLAAAMQLFEGVCPEDWISYGIHIATKGETITPDVLIDVTRTNVEGNWAQAGGTDMTRDPTIAEHASLVGLLLCLYRLSKIVGQNTANYKTNVADRMEQIFETAPFVKVVEHHTLMTVHKMCANWSTIPNFRFLAGTYDMFFARVEHLYSALRVGTVVTAYEDCSGLVSFTGFIKQINLSARDALLYFFHKKFEEEIKRMFEPGQETAVPHPYFIHFRALGVSGKSPYSSTAVGHHFNLIHFIGCYMGQVKSLNATVIQTCAPHEMSVLGGYLGEEFFGKGTFERRFFRDEKEMQDYADLEGARVEASLADDGTVDSDDEDFFSGETRSPEAVYSRIMMNNGRLKKSHIRRYVSVSSNHQARPNSFAEFLNKVYSESS</sequence>
<organismHost>
    <name type="scientific">Homo sapiens</name>
    <name type="common">Human</name>
    <dbReference type="NCBI Taxonomy" id="9606"/>
</organismHost>
<organismHost>
    <name type="scientific">Mammalia</name>
    <dbReference type="NCBI Taxonomy" id="40674"/>
</organismHost>